<keyword id="KW-0143">Chaperone</keyword>
<keyword id="KW-1015">Disulfide bond</keyword>
<keyword id="KW-0479">Metal-binding</keyword>
<keyword id="KW-0496">Mitochondrion</keyword>
<keyword id="KW-0653">Protein transport</keyword>
<keyword id="KW-1185">Reference proteome</keyword>
<keyword id="KW-0811">Translocation</keyword>
<keyword id="KW-0813">Transport</keyword>
<keyword id="KW-0862">Zinc</keyword>
<organism>
    <name type="scientific">Oryza sativa subsp. japonica</name>
    <name type="common">Rice</name>
    <dbReference type="NCBI Taxonomy" id="39947"/>
    <lineage>
        <taxon>Eukaryota</taxon>
        <taxon>Viridiplantae</taxon>
        <taxon>Streptophyta</taxon>
        <taxon>Embryophyta</taxon>
        <taxon>Tracheophyta</taxon>
        <taxon>Spermatophyta</taxon>
        <taxon>Magnoliopsida</taxon>
        <taxon>Liliopsida</taxon>
        <taxon>Poales</taxon>
        <taxon>Poaceae</taxon>
        <taxon>BOP clade</taxon>
        <taxon>Oryzoideae</taxon>
        <taxon>Oryzeae</taxon>
        <taxon>Oryzinae</taxon>
        <taxon>Oryza</taxon>
        <taxon>Oryza sativa</taxon>
    </lineage>
</organism>
<dbReference type="EMBL" id="AF150080">
    <property type="protein sequence ID" value="AAD39987.1"/>
    <property type="molecule type" value="mRNA"/>
</dbReference>
<dbReference type="EMBL" id="AP004178">
    <property type="protein sequence ID" value="BAD27835.1"/>
    <property type="molecule type" value="Genomic_DNA"/>
</dbReference>
<dbReference type="EMBL" id="AP008208">
    <property type="protein sequence ID" value="BAF09666.1"/>
    <property type="molecule type" value="Genomic_DNA"/>
</dbReference>
<dbReference type="EMBL" id="AP014958">
    <property type="protein sequence ID" value="BAS80311.1"/>
    <property type="molecule type" value="Genomic_DNA"/>
</dbReference>
<dbReference type="EMBL" id="CM000139">
    <property type="protein sequence ID" value="EAZ24197.1"/>
    <property type="molecule type" value="Genomic_DNA"/>
</dbReference>
<dbReference type="EMBL" id="AK108470">
    <property type="protein sequence ID" value="BAG98411.1"/>
    <property type="molecule type" value="mRNA"/>
</dbReference>
<dbReference type="RefSeq" id="XP_015626853.1">
    <property type="nucleotide sequence ID" value="XM_015771367.1"/>
</dbReference>
<dbReference type="SMR" id="Q9XGY5"/>
<dbReference type="FunCoup" id="Q9XGY5">
    <property type="interactions" value="2009"/>
</dbReference>
<dbReference type="STRING" id="39947.Q9XGY5"/>
<dbReference type="CarbonylDB" id="Q9XGY5"/>
<dbReference type="PaxDb" id="39947-Q9XGY5"/>
<dbReference type="EnsemblPlants" id="Os02t0682600-01">
    <property type="protein sequence ID" value="Os02t0682600-01"/>
    <property type="gene ID" value="Os02g0682600"/>
</dbReference>
<dbReference type="Gramene" id="Os02t0682600-01">
    <property type="protein sequence ID" value="Os02t0682600-01"/>
    <property type="gene ID" value="Os02g0682600"/>
</dbReference>
<dbReference type="KEGG" id="dosa:Os02g0682600"/>
<dbReference type="eggNOG" id="KOG1733">
    <property type="taxonomic scope" value="Eukaryota"/>
</dbReference>
<dbReference type="HOGENOM" id="CLU_141397_0_2_1"/>
<dbReference type="InParanoid" id="Q9XGY5"/>
<dbReference type="OMA" id="MAAWNQV"/>
<dbReference type="OrthoDB" id="7813104at2759"/>
<dbReference type="Proteomes" id="UP000000763">
    <property type="component" value="Chromosome 2"/>
</dbReference>
<dbReference type="Proteomes" id="UP000007752">
    <property type="component" value="Chromosome 2"/>
</dbReference>
<dbReference type="Proteomes" id="UP000059680">
    <property type="component" value="Chromosome 2"/>
</dbReference>
<dbReference type="GO" id="GO:0005758">
    <property type="term" value="C:mitochondrial intermembrane space"/>
    <property type="evidence" value="ECO:0007669"/>
    <property type="project" value="UniProtKB-SubCell"/>
</dbReference>
<dbReference type="GO" id="GO:0046872">
    <property type="term" value="F:metal ion binding"/>
    <property type="evidence" value="ECO:0007669"/>
    <property type="project" value="UniProtKB-KW"/>
</dbReference>
<dbReference type="GO" id="GO:0015031">
    <property type="term" value="P:protein transport"/>
    <property type="evidence" value="ECO:0007669"/>
    <property type="project" value="UniProtKB-KW"/>
</dbReference>
<dbReference type="FunFam" id="1.10.287.810:FF:000001">
    <property type="entry name" value="mitochondrial import inner membrane translocase subunit TIM13"/>
    <property type="match status" value="1"/>
</dbReference>
<dbReference type="Gene3D" id="1.10.287.810">
    <property type="entry name" value="Mitochondrial import inner membrane translocase subunit tim13 like domains"/>
    <property type="match status" value="1"/>
</dbReference>
<dbReference type="InterPro" id="IPR004217">
    <property type="entry name" value="Tim10-like"/>
</dbReference>
<dbReference type="InterPro" id="IPR035427">
    <property type="entry name" value="Tim10-like_dom_sf"/>
</dbReference>
<dbReference type="Pfam" id="PF02953">
    <property type="entry name" value="zf-Tim10_DDP"/>
    <property type="match status" value="1"/>
</dbReference>
<dbReference type="SUPFAM" id="SSF144122">
    <property type="entry name" value="Tim10-like"/>
    <property type="match status" value="1"/>
</dbReference>
<reference key="1">
    <citation type="journal article" date="1999" name="FEBS Lett.">
        <title>The mitochondrial TIM22 preprotein translocase is highly conserved throughout the eukaryotic kingdom.</title>
        <authorList>
            <person name="Bauer M.F."/>
            <person name="Rothbauer U."/>
            <person name="Muehlenbein N."/>
            <person name="Smith R.J.H."/>
            <person name="Gerbitz K.-D."/>
            <person name="Neupert W."/>
            <person name="Brunner M."/>
            <person name="Hofmann S."/>
        </authorList>
    </citation>
    <scope>NUCLEOTIDE SEQUENCE [MRNA]</scope>
</reference>
<reference key="2">
    <citation type="journal article" date="2005" name="Nature">
        <title>The map-based sequence of the rice genome.</title>
        <authorList>
            <consortium name="International rice genome sequencing project (IRGSP)"/>
        </authorList>
    </citation>
    <scope>NUCLEOTIDE SEQUENCE [LARGE SCALE GENOMIC DNA]</scope>
    <source>
        <strain>cv. Nipponbare</strain>
    </source>
</reference>
<reference key="3">
    <citation type="journal article" date="2008" name="Nucleic Acids Res.">
        <title>The rice annotation project database (RAP-DB): 2008 update.</title>
        <authorList>
            <consortium name="The rice annotation project (RAP)"/>
        </authorList>
    </citation>
    <scope>GENOME REANNOTATION</scope>
    <source>
        <strain>cv. Nipponbare</strain>
    </source>
</reference>
<reference key="4">
    <citation type="journal article" date="2013" name="Rice">
        <title>Improvement of the Oryza sativa Nipponbare reference genome using next generation sequence and optical map data.</title>
        <authorList>
            <person name="Kawahara Y."/>
            <person name="de la Bastide M."/>
            <person name="Hamilton J.P."/>
            <person name="Kanamori H."/>
            <person name="McCombie W.R."/>
            <person name="Ouyang S."/>
            <person name="Schwartz D.C."/>
            <person name="Tanaka T."/>
            <person name="Wu J."/>
            <person name="Zhou S."/>
            <person name="Childs K.L."/>
            <person name="Davidson R.M."/>
            <person name="Lin H."/>
            <person name="Quesada-Ocampo L."/>
            <person name="Vaillancourt B."/>
            <person name="Sakai H."/>
            <person name="Lee S.S."/>
            <person name="Kim J."/>
            <person name="Numa H."/>
            <person name="Itoh T."/>
            <person name="Buell C.R."/>
            <person name="Matsumoto T."/>
        </authorList>
    </citation>
    <scope>GENOME REANNOTATION</scope>
    <source>
        <strain>cv. Nipponbare</strain>
    </source>
</reference>
<reference key="5">
    <citation type="journal article" date="2005" name="PLoS Biol.">
        <title>The genomes of Oryza sativa: a history of duplications.</title>
        <authorList>
            <person name="Yu J."/>
            <person name="Wang J."/>
            <person name="Lin W."/>
            <person name="Li S."/>
            <person name="Li H."/>
            <person name="Zhou J."/>
            <person name="Ni P."/>
            <person name="Dong W."/>
            <person name="Hu S."/>
            <person name="Zeng C."/>
            <person name="Zhang J."/>
            <person name="Zhang Y."/>
            <person name="Li R."/>
            <person name="Xu Z."/>
            <person name="Li S."/>
            <person name="Li X."/>
            <person name="Zheng H."/>
            <person name="Cong L."/>
            <person name="Lin L."/>
            <person name="Yin J."/>
            <person name="Geng J."/>
            <person name="Li G."/>
            <person name="Shi J."/>
            <person name="Liu J."/>
            <person name="Lv H."/>
            <person name="Li J."/>
            <person name="Wang J."/>
            <person name="Deng Y."/>
            <person name="Ran L."/>
            <person name="Shi X."/>
            <person name="Wang X."/>
            <person name="Wu Q."/>
            <person name="Li C."/>
            <person name="Ren X."/>
            <person name="Wang J."/>
            <person name="Wang X."/>
            <person name="Li D."/>
            <person name="Liu D."/>
            <person name="Zhang X."/>
            <person name="Ji Z."/>
            <person name="Zhao W."/>
            <person name="Sun Y."/>
            <person name="Zhang Z."/>
            <person name="Bao J."/>
            <person name="Han Y."/>
            <person name="Dong L."/>
            <person name="Ji J."/>
            <person name="Chen P."/>
            <person name="Wu S."/>
            <person name="Liu J."/>
            <person name="Xiao Y."/>
            <person name="Bu D."/>
            <person name="Tan J."/>
            <person name="Yang L."/>
            <person name="Ye C."/>
            <person name="Zhang J."/>
            <person name="Xu J."/>
            <person name="Zhou Y."/>
            <person name="Yu Y."/>
            <person name="Zhang B."/>
            <person name="Zhuang S."/>
            <person name="Wei H."/>
            <person name="Liu B."/>
            <person name="Lei M."/>
            <person name="Yu H."/>
            <person name="Li Y."/>
            <person name="Xu H."/>
            <person name="Wei S."/>
            <person name="He X."/>
            <person name="Fang L."/>
            <person name="Zhang Z."/>
            <person name="Zhang Y."/>
            <person name="Huang X."/>
            <person name="Su Z."/>
            <person name="Tong W."/>
            <person name="Li J."/>
            <person name="Tong Z."/>
            <person name="Li S."/>
            <person name="Ye J."/>
            <person name="Wang L."/>
            <person name="Fang L."/>
            <person name="Lei T."/>
            <person name="Chen C.-S."/>
            <person name="Chen H.-C."/>
            <person name="Xu Z."/>
            <person name="Li H."/>
            <person name="Huang H."/>
            <person name="Zhang F."/>
            <person name="Xu H."/>
            <person name="Li N."/>
            <person name="Zhao C."/>
            <person name="Li S."/>
            <person name="Dong L."/>
            <person name="Huang Y."/>
            <person name="Li L."/>
            <person name="Xi Y."/>
            <person name="Qi Q."/>
            <person name="Li W."/>
            <person name="Zhang B."/>
            <person name="Hu W."/>
            <person name="Zhang Y."/>
            <person name="Tian X."/>
            <person name="Jiao Y."/>
            <person name="Liang X."/>
            <person name="Jin J."/>
            <person name="Gao L."/>
            <person name="Zheng W."/>
            <person name="Hao B."/>
            <person name="Liu S.-M."/>
            <person name="Wang W."/>
            <person name="Yuan L."/>
            <person name="Cao M."/>
            <person name="McDermott J."/>
            <person name="Samudrala R."/>
            <person name="Wang J."/>
            <person name="Wong G.K.-S."/>
            <person name="Yang H."/>
        </authorList>
    </citation>
    <scope>NUCLEOTIDE SEQUENCE [LARGE SCALE GENOMIC DNA]</scope>
    <source>
        <strain>cv. Nipponbare</strain>
    </source>
</reference>
<reference key="6">
    <citation type="journal article" date="2003" name="Science">
        <title>Collection, mapping, and annotation of over 28,000 cDNA clones from japonica rice.</title>
        <authorList>
            <consortium name="The rice full-length cDNA consortium"/>
        </authorList>
    </citation>
    <scope>NUCLEOTIDE SEQUENCE [LARGE SCALE MRNA]</scope>
    <source>
        <strain>cv. Nipponbare</strain>
    </source>
</reference>
<accession>Q9XGY5</accession>
<accession>Q0DYM2</accession>
<accession>Q6EU35</accession>
<gene>
    <name type="primary">TIM13</name>
    <name type="ordered locus">Os02g0682600</name>
    <name type="ordered locus">LOC_Os02g45820</name>
    <name type="ORF">OJ1123_G04.16</name>
    <name evidence="4" type="ORF">OsJ_07945</name>
</gene>
<evidence type="ECO:0000250" key="1"/>
<evidence type="ECO:0000250" key="2">
    <source>
        <dbReference type="UniProtKB" id="Q9XH48"/>
    </source>
</evidence>
<evidence type="ECO:0000305" key="3"/>
<evidence type="ECO:0000312" key="4">
    <source>
        <dbReference type="EMBL" id="EAZ24197.1"/>
    </source>
</evidence>
<comment type="function">
    <text evidence="1">Mitochondrial intermembrane chaperone that participates in the import and insertion of some multi-pass transmembrane proteins into the mitochondrial inner membrane. Also required for the transfer of beta-barrel precursors from the TOM complex to the sorting and assembly machinery (SAM complex) of the outer membrane. Acts as a chaperone-like protein that protects the hydrophobic precursors from aggregation and guide them through the mitochondrial intermembrane space. The TIM8-TIM13 complex mediates the import of some proteins while the predominant TIM9-TIM10 70 kDa complex mediates the import of much more proteins (By similarity).</text>
</comment>
<comment type="subunit">
    <text evidence="1">Heterohexamer; composed of 3 copies of TIM8 and 3 copies of TIM13, named soluble 70 kDa complex. Associates with the TIM22 complex, whose core is composed of TIM22 (By similarity).</text>
</comment>
<comment type="subcellular location">
    <subcellularLocation>
        <location evidence="2">Mitochondrion intermembrane space</location>
    </subcellularLocation>
</comment>
<comment type="domain">
    <text evidence="1">The twin CX3C motif contains 4 conserved Cys residues that form 2 disulfide bonds in the mitochondrial intermembrane space. However, during the transit of TIM13 from cytoplasm into mitochondrion, the Cys residues probably coordinate zinc, thereby preventing folding and allowing its transfer across mitochondrial outer membrane (By similarity).</text>
</comment>
<comment type="similarity">
    <text evidence="3">Belongs to the small Tim family.</text>
</comment>
<name>TIM13_ORYSJ</name>
<sequence>MDSFSSSSGSPPNTEALMDQIKAQLAQAYAQEFLETVGNKCFAKCVTKPGSSLSGSESSCISRCVDRYIEATGIVSRALFSSTR</sequence>
<protein>
    <recommendedName>
        <fullName>Mitochondrial import inner membrane translocase subunit Tim13</fullName>
    </recommendedName>
</protein>
<proteinExistence type="inferred from homology"/>
<feature type="chain" id="PRO_0000193630" description="Mitochondrial import inner membrane translocase subunit Tim13">
    <location>
        <begin position="1"/>
        <end position="84"/>
    </location>
</feature>
<feature type="short sequence motif" description="Twin CX3C motif">
    <location>
        <begin position="41"/>
        <end position="64"/>
    </location>
</feature>
<feature type="disulfide bond" evidence="1">
    <location>
        <begin position="41"/>
        <end position="64"/>
    </location>
</feature>
<feature type="disulfide bond" evidence="1">
    <location>
        <begin position="45"/>
        <end position="60"/>
    </location>
</feature>